<sequence>MDAAGASCSSVDAVARELLMATLEELSQEQLKRFRHKLRDAPLDGRSIPWGRLERSDAVDLVDKLIEFYEPVPAVEMTRQVLKRSDIRDVASRLKQQQLQKLGPTSVLLSVSAFKKKYREHVLRQHAKVKERNARSVKINKRFTKLLIAPGTGAVEDELLGPLGEPEPERARRSDTHTFNRLFRGNDEESSQPLTVVLQGPAGIGKTMAAKKILYDWAAGKLYHSQVDFAFFMPCGELLERPGKRSLADLVLDQCPDRAWPVKRILAQPNRLLFILDGADELPTLPSSEATPCKDPLEATSGLRVLSGLLSQELLPGARLLVTTRHAATGRLQGRLCSPQCAEIRGFSDKDKKKYFFKFFRDERKAERAYRFVKENETLFALCFVPFVCWIVCTVLQQQLELGRDLSRTSKTTTSVYLLFITSMLKSAGTNGPRVQGELRTLCRLAREGILDHHKAQFSEEDLEKLKLRGSQVQTIFLNKKEIPGVLKTEVTYQFIDQSFQEFLAALSYLLEAERTPGTPAGGVQKLLNSDAELRGHLALTTRFLFGLLNTEGLRDIGNHFGCVVPDHVKKDTLRWVQGQSHPKGPPVGAKKTAELEDIEDAEEEEEEEEDLNFGLELLYCLYETQEEDFVRQALSSLPEIVLERVRLTRMDLEVLNYCVQCCPDGQALRLVSCGLVAAKEKKKKKKSLVKRLKGSQSTKKQPPVSLLRPLCETMTTPKCHLSVLILSHCRLPDAVCRDLSEALKVAPALRELGLLQSRLTNTGLRLLCEGLAWPKCQVKTLRMQLPDLQEVINYLVIVLQQSPVLTTLDLSGCQLPGVIVEPLCAALKHPKCSLKTLSLTSVELSENSLRDLQAVKTSKPDLSIIYSK</sequence>
<keyword id="KW-0877">Alternative promoter usage</keyword>
<keyword id="KW-0025">Alternative splicing</keyword>
<keyword id="KW-0067">ATP-binding</keyword>
<keyword id="KW-1003">Cell membrane</keyword>
<keyword id="KW-0963">Cytoplasm</keyword>
<keyword id="KW-0391">Immunity</keyword>
<keyword id="KW-1271">Inflammasome</keyword>
<keyword id="KW-0395">Inflammatory response</keyword>
<keyword id="KW-0399">Innate immunity</keyword>
<keyword id="KW-0433">Leucine-rich repeat</keyword>
<keyword id="KW-0472">Membrane</keyword>
<keyword id="KW-0547">Nucleotide-binding</keyword>
<keyword id="KW-0539">Nucleus</keyword>
<keyword id="KW-1185">Reference proteome</keyword>
<keyword id="KW-0677">Repeat</keyword>
<keyword id="KW-0832">Ubl conjugation</keyword>
<gene>
    <name evidence="34 37" type="primary">Nlrp6</name>
    <name evidence="35" type="synonym">Nalp6</name>
    <name evidence="33" type="synonym">Navr</name>
    <name evidence="31" type="synonym">Pypaf5</name>
</gene>
<evidence type="ECO:0000250" key="1">
    <source>
        <dbReference type="UniProtKB" id="P59044"/>
    </source>
</evidence>
<evidence type="ECO:0000250" key="2">
    <source>
        <dbReference type="UniProtKB" id="Q63035"/>
    </source>
</evidence>
<evidence type="ECO:0000255" key="3"/>
<evidence type="ECO:0000255" key="4">
    <source>
        <dbReference type="PROSITE-ProRule" id="PRU00061"/>
    </source>
</evidence>
<evidence type="ECO:0000255" key="5">
    <source>
        <dbReference type="PROSITE-ProRule" id="PRU00136"/>
    </source>
</evidence>
<evidence type="ECO:0000256" key="6">
    <source>
        <dbReference type="SAM" id="MobiDB-lite"/>
    </source>
</evidence>
<evidence type="ECO:0000269" key="7">
    <source>
    </source>
</evidence>
<evidence type="ECO:0000269" key="8">
    <source>
    </source>
</evidence>
<evidence type="ECO:0000269" key="9">
    <source>
    </source>
</evidence>
<evidence type="ECO:0000269" key="10">
    <source>
    </source>
</evidence>
<evidence type="ECO:0000269" key="11">
    <source>
    </source>
</evidence>
<evidence type="ECO:0000269" key="12">
    <source>
    </source>
</evidence>
<evidence type="ECO:0000269" key="13">
    <source>
    </source>
</evidence>
<evidence type="ECO:0000269" key="14">
    <source>
    </source>
</evidence>
<evidence type="ECO:0000269" key="15">
    <source>
    </source>
</evidence>
<evidence type="ECO:0000269" key="16">
    <source>
    </source>
</evidence>
<evidence type="ECO:0000269" key="17">
    <source>
    </source>
</evidence>
<evidence type="ECO:0000269" key="18">
    <source>
    </source>
</evidence>
<evidence type="ECO:0000269" key="19">
    <source>
    </source>
</evidence>
<evidence type="ECO:0000269" key="20">
    <source>
    </source>
</evidence>
<evidence type="ECO:0000269" key="21">
    <source>
    </source>
</evidence>
<evidence type="ECO:0000269" key="22">
    <source>
    </source>
</evidence>
<evidence type="ECO:0000269" key="23">
    <source>
    </source>
</evidence>
<evidence type="ECO:0000269" key="24">
    <source>
    </source>
</evidence>
<evidence type="ECO:0000269" key="25">
    <source>
    </source>
</evidence>
<evidence type="ECO:0000269" key="26">
    <source>
    </source>
</evidence>
<evidence type="ECO:0000269" key="27">
    <source>
    </source>
</evidence>
<evidence type="ECO:0000269" key="28">
    <source>
    </source>
</evidence>
<evidence type="ECO:0000269" key="29">
    <source>
    </source>
</evidence>
<evidence type="ECO:0000269" key="30">
    <source>
    </source>
</evidence>
<evidence type="ECO:0000303" key="31">
    <source>
    </source>
</evidence>
<evidence type="ECO:0000303" key="32">
    <source>
    </source>
</evidence>
<evidence type="ECO:0000303" key="33">
    <source>
    </source>
</evidence>
<evidence type="ECO:0000303" key="34">
    <source>
    </source>
</evidence>
<evidence type="ECO:0000303" key="35">
    <source ref="5"/>
</evidence>
<evidence type="ECO:0000305" key="36"/>
<evidence type="ECO:0000312" key="37">
    <source>
        <dbReference type="MGI" id="MGI:2141990"/>
    </source>
</evidence>
<accession>Q91WS2</accession>
<accession>C9W978</accession>
<accession>F8UKQ6</accession>
<accession>Q67EY0</accession>
<accession>Q8K0L4</accession>
<proteinExistence type="evidence at protein level"/>
<protein>
    <recommendedName>
        <fullName evidence="36">NACHT, LRR and PYD domains-containing protein 6</fullName>
    </recommendedName>
    <alternativeName>
        <fullName evidence="33">Angiotensin II/vasopressin receptor</fullName>
    </alternativeName>
    <alternativeName>
        <fullName evidence="33">Non-angiotensin-vasopressin receptor</fullName>
        <shortName evidence="33">Non-AVR</shortName>
    </alternativeName>
    <alternativeName>
        <fullName evidence="31">PYRIN-containing APAF1-like protein 5-like</fullName>
    </alternativeName>
</protein>
<reference key="1">
    <citation type="journal article" date="2011" name="Physiol. Genomics">
        <title>AVR/NAVR deficiency lowers blood pressure and differentially affects urinary concentrating ability, cognition, and anxiety-like behavior in male and female mice.</title>
        <authorList>
            <person name="Herrera V.L."/>
            <person name="Bagamasbad P."/>
            <person name="Decano J.L."/>
            <person name="Ruiz-Opazo N."/>
        </authorList>
    </citation>
    <scope>NUCLEOTIDE SEQUENCE [MRNA] (ISOFORM 1)</scope>
    <scope>DISRUPTION PHENOTYPE</scope>
    <source>
        <strain>C57BL/6J</strain>
        <tissue>Kidney</tissue>
    </source>
</reference>
<reference key="2">
    <citation type="journal article" date="2011" name="Proc. Natl. Acad. Sci. U.S.A.">
        <title>Nod-like receptor pyrin domain-containing protein 6 (NLRP6) controls epithelial self-renewal and colorectal carcinogenesis upon injury.</title>
        <authorList>
            <person name="Normand S."/>
            <person name="Delanoye-Crespin A."/>
            <person name="Bressenot A."/>
            <person name="Huot L."/>
            <person name="Grandjean T."/>
            <person name="Peyrin-Biroulet L."/>
            <person name="Lemoine Y."/>
            <person name="Hot D."/>
            <person name="Chamaillard M."/>
        </authorList>
    </citation>
    <scope>NUCLEOTIDE SEQUENCE [MRNA] (ISOFORM 3)</scope>
    <scope>FUNCTION</scope>
    <scope>TISSUE SPECIFICITY</scope>
    <scope>DISRUPTION PHENOTYPE</scope>
</reference>
<reference key="3">
    <citation type="journal article" date="2009" name="PLoS Biol.">
        <title>Lineage-specific biology revealed by a finished genome assembly of the mouse.</title>
        <authorList>
            <person name="Church D.M."/>
            <person name="Goodstadt L."/>
            <person name="Hillier L.W."/>
            <person name="Zody M.C."/>
            <person name="Goldstein S."/>
            <person name="She X."/>
            <person name="Bult C.J."/>
            <person name="Agarwala R."/>
            <person name="Cherry J.L."/>
            <person name="DiCuccio M."/>
            <person name="Hlavina W."/>
            <person name="Kapustin Y."/>
            <person name="Meric P."/>
            <person name="Maglott D."/>
            <person name="Birtle Z."/>
            <person name="Marques A.C."/>
            <person name="Graves T."/>
            <person name="Zhou S."/>
            <person name="Teague B."/>
            <person name="Potamousis K."/>
            <person name="Churas C."/>
            <person name="Place M."/>
            <person name="Herschleb J."/>
            <person name="Runnheim R."/>
            <person name="Forrest D."/>
            <person name="Amos-Landgraf J."/>
            <person name="Schwartz D.C."/>
            <person name="Cheng Z."/>
            <person name="Lindblad-Toh K."/>
            <person name="Eichler E.E."/>
            <person name="Ponting C.P."/>
        </authorList>
    </citation>
    <scope>NUCLEOTIDE SEQUENCE [LARGE SCALE GENOMIC DNA]</scope>
    <source>
        <strain>C57BL/6J</strain>
    </source>
</reference>
<reference key="4">
    <citation type="journal article" date="2004" name="Genome Res.">
        <title>The status, quality, and expansion of the NIH full-length cDNA project: the Mammalian Gene Collection (MGC).</title>
        <authorList>
            <consortium name="The MGC Project Team"/>
        </authorList>
    </citation>
    <scope>NUCLEOTIDE SEQUENCE [LARGE SCALE MRNA] (ISOFORM 2)</scope>
    <source>
        <tissue>Kidney</tissue>
    </source>
</reference>
<reference key="5">
    <citation type="submission" date="2003-07" db="EMBL/GenBank/DDBJ databases">
        <title>Murine NALPs: a family of proteins involved in inflammation.</title>
        <authorList>
            <person name="Martinon F."/>
            <person name="Hofmann K."/>
            <person name="Tschopp J."/>
        </authorList>
    </citation>
    <scope>NUCLEOTIDE SEQUENCE [MRNA] (ISOFORM 2)</scope>
    <source>
        <strain>C57BL/6J</strain>
    </source>
</reference>
<reference key="6">
    <citation type="journal article" date="2003" name="FEBS Lett.">
        <title>Identification of mammalian orthologs associates PYPAF5 with distinct functional roles.</title>
        <authorList>
            <person name="Albrecht M."/>
            <person name="Domingues F.S."/>
            <person name="Schreiber S."/>
            <person name="Lengauer T."/>
        </authorList>
    </citation>
    <scope>IDENTIFICATION OF MAMMALIAN ORTHOLOGS OF NALP6</scope>
</reference>
<reference key="7">
    <citation type="journal article" date="2011" name="Cell">
        <title>NLRP6 inflammasome regulates colonic microbial ecology and risk for colitis.</title>
        <authorList>
            <person name="Elinav E."/>
            <person name="Strowig T."/>
            <person name="Kau A.L."/>
            <person name="Henao-Mejia J."/>
            <person name="Thaiss C.A."/>
            <person name="Booth C.J."/>
            <person name="Peaper D.R."/>
            <person name="Bertin J."/>
            <person name="Eisenbarth S.C."/>
            <person name="Gordon J.I."/>
            <person name="Flavell R.A."/>
        </authorList>
    </citation>
    <scope>FUNCTION</scope>
    <scope>DISRUPTION PHENOTYPE</scope>
    <scope>TISSUE SPECIFICITY</scope>
</reference>
<reference key="8">
    <citation type="journal article" date="2011" name="J. Immunol.">
        <title>A functional role for nlrp6 in intestinal inflammation and tumorigenesis.</title>
        <authorList>
            <person name="Chen G.Y."/>
            <person name="Liu M."/>
            <person name="Wang F."/>
            <person name="Bertin J."/>
            <person name="Nunez G."/>
        </authorList>
    </citation>
    <scope>FUNCTION</scope>
    <scope>TISSUE SPECIFICITY</scope>
    <scope>DISRUPTION PHENOTYPE</scope>
</reference>
<reference key="9">
    <citation type="journal article" date="2012" name="Nature">
        <title>NLRP6 negatively regulates innate immunity and host defence against bacterial pathogens.</title>
        <authorList>
            <person name="Anand P.K."/>
            <person name="Malireddi R.K."/>
            <person name="Lukens J.R."/>
            <person name="Vogel P."/>
            <person name="Bertin J."/>
            <person name="Lamkanfi M."/>
            <person name="Kanneganti T.D."/>
        </authorList>
    </citation>
    <scope>FUNCTION</scope>
    <scope>TISSUE SPECIFICITY</scope>
    <scope>DISRUPTION PHENOTYPE</scope>
</reference>
<reference key="10">
    <citation type="journal article" date="2013" name="Gastroenterology">
        <title>Stress-induced corticotropin-releasing hormone-mediated NLRP6 inflammasome inhibition and transmissible enteritis in mice.</title>
        <authorList>
            <person name="Sun Y."/>
            <person name="Zhang M."/>
            <person name="Chen C.C."/>
            <person name="Gillilland M. III"/>
            <person name="Sun X."/>
            <person name="El-Zaatari M."/>
            <person name="Huffnagle G.B."/>
            <person name="Young V.B."/>
            <person name="Zhang J."/>
            <person name="Hong S.C."/>
            <person name="Chang Y.M."/>
            <person name="Gumucio D.L."/>
            <person name="Owyang C."/>
            <person name="Kao J.Y."/>
        </authorList>
    </citation>
    <scope>INDUCTION BY CRH AND ROSIGLITAZONE</scope>
</reference>
<reference key="11">
    <citation type="journal article" date="2013" name="Proc. Natl. Acad. Sci. U.S.A.">
        <title>Microbiota-induced activation of epithelial IL-6 signaling links inflammasome-driven inflammation with transmissible cancer.</title>
        <authorList>
            <person name="Hu B."/>
            <person name="Elinav E."/>
            <person name="Huber S."/>
            <person name="Strowig T."/>
            <person name="Hao L."/>
            <person name="Hafemann A."/>
            <person name="Jin C."/>
            <person name="Wunderlich C."/>
            <person name="Wunderlich T."/>
            <person name="Eisenbarth S.C."/>
            <person name="Flavell R.A."/>
        </authorList>
    </citation>
    <scope>FUNCTION</scope>
</reference>
<reference key="12">
    <citation type="journal article" date="2014" name="Cell">
        <title>NLRP6 inflammasome orchestrates the colonic host-microbial interface by regulating goblet cell mucus secretion.</title>
        <authorList>
            <person name="Wlodarska M."/>
            <person name="Thaiss C.A."/>
            <person name="Nowarski R."/>
            <person name="Henao-Mejia J."/>
            <person name="Zhang J.P."/>
            <person name="Brown E.M."/>
            <person name="Frankel G."/>
            <person name="Levy M."/>
            <person name="Katz M.N."/>
            <person name="Philbrick W.M."/>
            <person name="Elinav E."/>
            <person name="Finlay B.B."/>
            <person name="Flavell R.A."/>
        </authorList>
    </citation>
    <scope>FUNCTION</scope>
    <scope>TISSUE SPECIFICITY</scope>
    <scope>DISRUPTION PHENOTYPE</scope>
</reference>
<reference key="13">
    <citation type="journal article" date="2015" name="Cell">
        <title>Microbiota-modulated metabolites shape the intestinal microenvironment by regulating NLRP6 inflammasome signaling.</title>
        <authorList>
            <person name="Levy M."/>
            <person name="Thaiss C.A."/>
            <person name="Zeevi D."/>
            <person name="Dohnalova L."/>
            <person name="Zilberman-Schapira G."/>
            <person name="Mahdi J.A."/>
            <person name="David E."/>
            <person name="Savidor A."/>
            <person name="Korem T."/>
            <person name="Herzig Y."/>
            <person name="Pevsner-Fischer M."/>
            <person name="Shapiro H."/>
            <person name="Christ A."/>
            <person name="Harmelin A."/>
            <person name="Halpern Z."/>
            <person name="Latz E."/>
            <person name="Flavell R.A."/>
            <person name="Amit I."/>
            <person name="Segal E."/>
            <person name="Elinav E."/>
        </authorList>
    </citation>
    <scope>FUNCTION</scope>
    <scope>DISRUPTION PHENOTYPE</scope>
</reference>
<reference key="14">
    <citation type="journal article" date="2015" name="J. Neuroinflamm.">
        <title>Nlrp6 promotes recovery after peripheral nerve injury independently of inflammasomes.</title>
        <authorList>
            <person name="Ydens E."/>
            <person name="Demon D."/>
            <person name="Lornet G."/>
            <person name="De Winter V."/>
            <person name="Timmerman V."/>
            <person name="Lamkanfi M."/>
            <person name="Janssens S."/>
        </authorList>
    </citation>
    <scope>FUNCTION</scope>
    <scope>DISRUPTION PHENOTYPE</scope>
    <scope>DEVELOPMENTAL STAGE</scope>
</reference>
<reference key="15">
    <citation type="journal article" date="2015" name="Science">
        <title>Nlrp6 regulates intestinal antiviral innate immunity.</title>
        <authorList>
            <person name="Wang P."/>
            <person name="Zhu S."/>
            <person name="Yang L."/>
            <person name="Cui S."/>
            <person name="Pan W."/>
            <person name="Jackson R."/>
            <person name="Zheng Y."/>
            <person name="Rongvaux A."/>
            <person name="Sun Q."/>
            <person name="Yang G."/>
            <person name="Gao S."/>
            <person name="Lin R."/>
            <person name="You F."/>
            <person name="Flavell R."/>
            <person name="Fikrig E."/>
        </authorList>
    </citation>
    <scope>FUNCTION</scope>
    <scope>DISRUPTION PHENOTYPE</scope>
    <scope>INTERACTION WITH DHX15</scope>
</reference>
<reference key="16">
    <citation type="journal article" date="2016" name="Science">
        <title>A sentinel goblet cell guards the colonic crypt by triggering Nlrp6-dependent Muc2 secretion.</title>
        <authorList>
            <person name="Birchenough G.M."/>
            <person name="Nystroem E.E."/>
            <person name="Johansson M.E."/>
            <person name="Hansson G.C."/>
        </authorList>
    </citation>
    <scope>FUNCTION</scope>
</reference>
<reference key="17">
    <citation type="journal article" date="2017" name="Cell Rep.">
        <title>NLRP6 Protects Il10-/- Mice from Colitis by Limiting Colonization of Akkermansia muciniphila.</title>
        <authorList>
            <person name="Seregin S.S."/>
            <person name="Golovchenko N."/>
            <person name="Schaf B."/>
            <person name="Chen J."/>
            <person name="Pudlo N.A."/>
            <person name="Mitchell J."/>
            <person name="Baxter N.T."/>
            <person name="Zhao L."/>
            <person name="Schloss P.D."/>
            <person name="Martens E.C."/>
            <person name="Eaton K.A."/>
            <person name="Chen G.Y."/>
        </authorList>
    </citation>
    <scope>FUNCTION</scope>
</reference>
<reference key="18">
    <citation type="journal article" date="2017" name="Cell Rep.">
        <title>The NLR protein NLRP6 does not impact gut microbiota composition.</title>
        <authorList>
            <person name="Lemire P."/>
            <person name="Robertson S.J."/>
            <person name="Maughan H."/>
            <person name="Tattoli I."/>
            <person name="Streutker C.J."/>
            <person name="Platnich J.M."/>
            <person name="Muruve D.A."/>
            <person name="Philpott D.J."/>
            <person name="Girardin S.E."/>
        </authorList>
    </citation>
    <scope>FUNCTION</scope>
    <scope>DISRUPTION PHENOTYPE</scope>
</reference>
<reference key="19">
    <citation type="journal article" date="2017" name="Cell Rep.">
        <title>Shaping of intestinal microbiota in Nlrp6- and Rag2-deficient mice depends on community structure.</title>
        <authorList>
            <person name="Galvez E.J.C."/>
            <person name="Iljazovic A."/>
            <person name="Gronow A."/>
            <person name="Flavell R."/>
            <person name="Strowig T."/>
        </authorList>
    </citation>
    <scope>FUNCTION</scope>
    <scope>DISRUPTION PHENOTYPE</scope>
</reference>
<reference key="20">
    <citation type="journal article" date="2017" name="Immunity">
        <title>Nlrp6- and ASC-dependent inflammasomes do not shape the commensal gut microbiota composition.</title>
        <authorList>
            <person name="Mamantopoulos M."/>
            <person name="Ronchi F."/>
            <person name="Van Hauwermeiren F."/>
            <person name="Vieira-Silva S."/>
            <person name="Yilmaz B."/>
            <person name="Martens L."/>
            <person name="Saeys Y."/>
            <person name="Drexler S.K."/>
            <person name="Yazdi A.S."/>
            <person name="Raes J."/>
            <person name="Lamkanfi M."/>
            <person name="McCoy K.D."/>
            <person name="Wullaert A."/>
        </authorList>
    </citation>
    <scope>FUNCTION</scope>
    <scope>DISRUPTION PHENOTYPE</scope>
</reference>
<reference key="21">
    <citation type="journal article" date="2018" name="Cell">
        <title>The NLRP6 inflammasome recognizes lipoteichoic acid and regulates Gram-positive pathogen infection.</title>
        <authorList>
            <person name="Hara H."/>
            <person name="Seregin S.S."/>
            <person name="Yang D."/>
            <person name="Fukase K."/>
            <person name="Chamaillard M."/>
            <person name="Alnemri E.S."/>
            <person name="Inohara N."/>
            <person name="Chen G.Y."/>
            <person name="Nunez G."/>
        </authorList>
    </citation>
    <scope>FUNCTION</scope>
</reference>
<reference key="22">
    <citation type="journal article" date="2018" name="PLoS Pathog.">
        <title>NLRP6 negatively regulates pulmonary host defense in Gram-positive bacterial infection through modulating neutrophil recruitment and function.</title>
        <authorList>
            <person name="Ghimire L."/>
            <person name="Paudel S."/>
            <person name="Jin L."/>
            <person name="Baral P."/>
            <person name="Cai S."/>
            <person name="Jeyaseelan S."/>
        </authorList>
    </citation>
    <scope>FUNCTION</scope>
    <scope>SUBCELLULAR LOCATION</scope>
</reference>
<reference key="23">
    <citation type="journal article" date="2020" name="Nat. Immunol.">
        <title>Deubiquitination of NLRP6 inflammasome by Cyld critically regulates intestinal inflammation.</title>
        <authorList>
            <person name="Mukherjee S."/>
            <person name="Kumar R."/>
            <person name="Tsakem Lenou E."/>
            <person name="Basrur V."/>
            <person name="Kontoyiannis D.L."/>
            <person name="Ioakeimidis F."/>
            <person name="Mosialos G."/>
            <person name="Theiss A.L."/>
            <person name="Flavell R.A."/>
            <person name="Venuprasad K."/>
        </authorList>
    </citation>
    <scope>FUNCTION</scope>
    <scope>UBIQUITINATION</scope>
    <scope>INTERACTION WITH PYCARD</scope>
</reference>
<reference key="24">
    <citation type="journal article" date="2021" name="Cell">
        <title>Phase separation drives RNA virus-induced activation of the NLRP6 inflammasome.</title>
        <authorList>
            <person name="Shen C."/>
            <person name="Li R."/>
            <person name="Negro R."/>
            <person name="Cheng J."/>
            <person name="Vora S.M."/>
            <person name="Fu T.M."/>
            <person name="Wang A."/>
            <person name="He K."/>
            <person name="Andreeva L."/>
            <person name="Gao P."/>
            <person name="Tian Z."/>
            <person name="Flavell R.A."/>
            <person name="Zhu S."/>
            <person name="Wu H."/>
        </authorList>
    </citation>
    <scope>FUNCTION</scope>
    <scope>SUBCELLULAR LOCATION</scope>
    <scope>DOMAIN</scope>
    <scope>INTERACTION WITH PYCARD</scope>
    <scope>MUTAGENESIS OF 170-ARG--ARG-173 AND 350-LYS--LYS-354</scope>
</reference>
<reference key="25">
    <citation type="journal article" date="2021" name="Int. J. Mol. Sci.">
        <title>The Critical Role of NLRP6 Inflammasome in Streptococcus pneumoniae Infection In Vitro and In Vivo.</title>
        <authorList>
            <person name="Xu D."/>
            <person name="Wu X."/>
            <person name="Peng L."/>
            <person name="Chen T."/>
            <person name="Huang Q."/>
            <person name="Wang Y."/>
            <person name="Ye C."/>
            <person name="Peng Y."/>
            <person name="Hu D."/>
            <person name="Fang R."/>
        </authorList>
    </citation>
    <scope>FUNCTION</scope>
</reference>
<reference key="26">
    <citation type="journal article" date="2021" name="Mucosal Immunol.">
        <title>NLRP6 modulates neutrophil homeostasis in bacterial pneumonia-derived sepsis.</title>
        <authorList>
            <person name="Cai S."/>
            <person name="Paudel S."/>
            <person name="Jin L."/>
            <person name="Ghimire L."/>
            <person name="Taylor C.M."/>
            <person name="Wakamatsu N."/>
            <person name="Bhattarai D."/>
            <person name="Jeyaseelan S."/>
        </authorList>
    </citation>
    <scope>FUNCTION</scope>
</reference>
<reference key="27">
    <citation type="journal article" date="2021" name="PLoS Negl. Trop. Dis.">
        <title>NLRP6-associated host microbiota composition impacts in the intestinal barrier to systemic dissemination of Brucella abortus.</title>
        <authorList>
            <person name="Rungue M."/>
            <person name="Melo V."/>
            <person name="Martins D."/>
            <person name="Campos P.C."/>
            <person name="Leles G."/>
            <person name="Galvao I."/>
            <person name="Mendes V."/>
            <person name="Aganetti M."/>
            <person name="Pedersen A."/>
            <person name="Assis N.R.G."/>
            <person name="Santos R."/>
            <person name="Cassali G.D."/>
            <person name="Godard A.L.B."/>
            <person name="Martins F.S."/>
            <person name="Oliveira S.C."/>
            <person name="Vieira A.T."/>
        </authorList>
    </citation>
    <scope>FUNCTION</scope>
</reference>
<reference key="28">
    <citation type="journal article" date="2021" name="Proc. Natl. Acad. Sci. U.S.A.">
        <title>The intestinal parasite Cryptosporidium is controlled by an enterocyte intrinsic inflammasome that depends on NLRP6.</title>
        <authorList>
            <person name="Sateriale A."/>
            <person name="Gullicksrud J.A."/>
            <person name="Engiles J.B."/>
            <person name="McLeod B.I."/>
            <person name="Kugler E.M."/>
            <person name="Henao-Mejia J."/>
            <person name="Zhou T."/>
            <person name="Ring A.M."/>
            <person name="Brodsky I.E."/>
            <person name="Hunter C.A."/>
            <person name="Striepen B."/>
        </authorList>
    </citation>
    <scope>FUNCTION</scope>
</reference>
<organism>
    <name type="scientific">Mus musculus</name>
    <name type="common">Mouse</name>
    <dbReference type="NCBI Taxonomy" id="10090"/>
    <lineage>
        <taxon>Eukaryota</taxon>
        <taxon>Metazoa</taxon>
        <taxon>Chordata</taxon>
        <taxon>Craniata</taxon>
        <taxon>Vertebrata</taxon>
        <taxon>Euteleostomi</taxon>
        <taxon>Mammalia</taxon>
        <taxon>Eutheria</taxon>
        <taxon>Euarchontoglires</taxon>
        <taxon>Glires</taxon>
        <taxon>Rodentia</taxon>
        <taxon>Myomorpha</taxon>
        <taxon>Muroidea</taxon>
        <taxon>Muridae</taxon>
        <taxon>Murinae</taxon>
        <taxon>Mus</taxon>
        <taxon>Mus</taxon>
    </lineage>
</organism>
<comment type="function">
    <text evidence="8 9 10 11 13 14 15 16 17 18 19 20 21 22 23 24 25 26 27 28 29 30">Acts as the sensor component of the NLRP6 inflammasome, which mediates inflammasome activation in response to various pathogen-associated signals, leading to maturation and secretion of IL1B and IL18 (PubMed:21593405, PubMed:30392956, PubMed:32424362, PubMed:34678144). Inflammasomes are supramolecular complexes that assemble in the cytosol in response to pathogens and other damage-associated signals and play critical roles in innate immunity and inflammation (PubMed:30392956). Acts as a recognition receptor (PRR): recognizes and binds specific pathogens and other damage-associated signals, such as lipoteichoic acid (LTA), a cell-wall component of Gram-positive bacteria, or double stranded RNA (dsRNA) (PubMed:26494172, PubMed:30392956, PubMed:34678144). May also recognize and bind lipopolysaccharide (LPS), a major component of the outer membrane of Gram-negative bacteria; however, LPS is probably not a major activator of the NLRP6 inflammasome (PubMed:34678144). Following LTA- or dsRNA-binding, NLRP6 undergoes liquid-liquid phase separation (LLPS), enhancing multivalent interactions, an essential step for the formation of the NLRP6 inflammasome polymeric complex (PubMed:34678144). The NLRP6 inflammasome acts by promoting recruitment of effector pro-inflammatory caspases (CASP1 and/or CASP4) that catalyze maturation and secretion of IL1B and IL18 in the extracellular milieu (PubMed:30392956). The NLRP6 inflammasome plays a central role in the maintenance of epithelial integrity and host defense against microbial infections in the intestine (PubMed:21565393, PubMed:22763455, PubMed:23696660, PubMed:26638072, PubMed:28445725, PubMed:30392956). Required to restrict infection against Gram-positive bacteria by recognizing lipoteichoic acid (LTA), leading to recruitment of CASP4 and CASP1, and subsequent maturation and secretion of IL1B and IL18 (PubMed:30392956). Involved in intestinal antiviral innate immunity together with DHX15: recognizes and binds viral dsRNA to restrict infection by enteric viruses through the interferon pathway and GSDMD-dependent release of IL18 (PubMed:26494172, PubMed:34678144). Required to prevent infection by the apicomplexan parasite C.tyzzeri in enterocytes by promoting GSDMD-dependent release of IL18 (PubMed:33372132). The NLRP6 inflammasome may also regulate the gut microbiota composition by acting as a sensor of microbiota-associated metabolites to form a PYCARD/ASC-dependent inflammasome for downstream IL18 release and secretion of antimicrobial peptides (PubMed:21565393, PubMed:22763455, PubMed:26638072, PubMed:33617596). Its role in the regulation of the gut microbiota composition is however subject to discussion (PubMed:28801232, PubMed:29281815, PubMed:29281837). Essential for gut mucosal self-renewal and proliferation (PubMed:21543645, PubMed:21565393, PubMed:21593405). Regulate mucus secretion in an inflammasome- and autophagy-dependent manner to prevent invasion by enteric bacteria (PubMed:24581500, PubMed:27339979). During systemic bacterial infections, the NLRP6 inflammasome negatively regulates neutrophil recruitment and neutrophil extracellular traps (NETs) formation (PubMed:22763455, PubMed:30248149, PubMed:33230225, PubMed:33918100). May promote peripheral nerve recovery following injury via an inflammasome-independent mechanism (PubMed:26253422).</text>
</comment>
<comment type="subunit">
    <text evidence="16 25 30">Homomultimer; forms the NLRP6 inflammasome polymeric complex, a filament composed of homopolymers in response to pathogens and other damage-associated signals (PubMed:34678144). The core of NLRP6 inflammasomes consists of a signal sensor component (NLRP6), an adapter (PYCARD/ASC), which recruits effector pro-inflammatory caspases (CASP1 and CASP4) (PubMed:34678144). Interacts (via pyrin domain) with PYCARD/ASC (via pyrin domain); interaction takes place following NLRP6 activation and formation of liquid-liquid phase separation (LLPS), initiating nucleation which greatly enhances further addition of soluble PYCARD/ASC molecules to the speck in a prion-like polymerization process (PubMed:32424362, PubMed:34678144). Clustered PYCARD/ASC nucleates the formation of CASP1 (or possibly CASP4) filaments through the interaction of their respective CARD domains, acting as a platform for CASP1 polymerization (PubMed:34678144). CASP1 filament formation increases local enzyme concentration, resulting in trans-autocleavage and activation (PubMed:34678144). Active CASP1 then processes IL1B and IL18 precursors, leading to the release of mature cytokines in the extracellular milieu and inflammatory response (PubMed:34678144). Interacts with DHX15 (PubMed:26494172).</text>
</comment>
<comment type="interaction">
    <interactant intactId="EBI-16182145">
        <id>Q91WS2</id>
    </interactant>
    <interactant intactId="EBI-8322087">
        <id>O35286</id>
        <label>Dhx15</label>
    </interactant>
    <organismsDiffer>false</organismsDiffer>
    <experiments>2</experiments>
</comment>
<comment type="interaction">
    <interactant intactId="EBI-16182226">
        <id>Q91WS2-1</id>
    </interactant>
    <interactant intactId="EBI-1237044">
        <id>O43143</id>
        <label>DHX15</label>
    </interactant>
    <organismsDiffer>true</organismsDiffer>
    <experiments>2</experiments>
</comment>
<comment type="interaction">
    <interactant intactId="EBI-16182226">
        <id>Q91WS2-1</id>
    </interactant>
    <interactant intactId="EBI-15577799">
        <id>Q7Z434-1</id>
        <label>MAVS</label>
    </interactant>
    <organismsDiffer>true</organismsDiffer>
    <experiments>2</experiments>
</comment>
<comment type="subcellular location">
    <subcellularLocation>
        <location evidence="2">Cytoplasm</location>
    </subcellularLocation>
    <subcellularLocation>
        <location evidence="23 30">Inflammasome</location>
    </subcellularLocation>
</comment>
<comment type="subcellular location">
    <molecule>Isoform 1</molecule>
    <subcellularLocation>
        <location evidence="2">Cytoplasm</location>
    </subcellularLocation>
    <subcellularLocation>
        <location evidence="1">Inflammasome</location>
    </subcellularLocation>
    <subcellularLocation>
        <location evidence="2">Cell membrane</location>
    </subcellularLocation>
    <subcellularLocation>
        <location evidence="2">Nucleus membrane</location>
    </subcellularLocation>
</comment>
<comment type="subcellular location">
    <molecule>Isoform 2</molecule>
    <subcellularLocation>
        <location evidence="2">Cytoplasm</location>
    </subcellularLocation>
    <subcellularLocation>
        <location evidence="2">Cell membrane</location>
    </subcellularLocation>
    <text evidence="2">Predominantly expressed in the cell membrane.</text>
</comment>
<comment type="alternative products">
    <event type="alternative promoter"/>
    <event type="alternative splicing"/>
    <isoform>
        <id>Q91WS2-1</id>
        <name>1</name>
        <name evidence="33">NAVR</name>
        <sequence type="displayed"/>
    </isoform>
    <isoform>
        <id>Q91WS2-2</id>
        <name>2</name>
        <name evidence="33">Angiotensin-vasopressin receptor</name>
        <name evidence="33">AVR</name>
        <sequence type="described" ref="VSP_042301"/>
    </isoform>
    <isoform>
        <id>Q91WS2-3</id>
        <name>3</name>
        <sequence type="described" ref="VSP_057971"/>
    </isoform>
</comment>
<comment type="tissue specificity">
    <text evidence="8 9 10 11 14">Highly expressed in the gastrointestinal tract, predominantly in colonic myofibroblasts and in colonic epithelial and endothelial cells. Within the intestinal mucosa, highly expressed by goblet cells. Also expressed in hepatocytes and in immune cells, including CD4(+) and CD8(+) T-cells, dendritic cells, mastocytes and peritoneal macrophages, as well as in lung, kidney, bladder and gonads.</text>
</comment>
<comment type="developmental stage">
    <text evidence="15">Up-regulated transiently following sterile or LPS-induced sciatic nerve injury with a peak after 4 hours.</text>
</comment>
<comment type="induction">
    <text evidence="12">Up-regulated by rosiglitazone, a PPARG agonist, in CT26 cells. Down-regulated by CRH during water-avoidance stress.</text>
</comment>
<comment type="domain">
    <text evidence="30">The poly-Lys disordered region (350-354) mediates the formation of liquid-liquid phase separation (LLPS), an essential step for nucleation and formation of the NLRP6 inflammasome complex.</text>
</comment>
<comment type="PTM">
    <text evidence="25">Polyubiquitinated with 'Lys-63'-linked chains, promoting the interaction with PYCARD/ASC and formation of the NLRP6 inflammasome (PubMed:32424362). Deubiquitination by CYLD decreases the interaction with PYCARD/ASC (PubMed:32424362).</text>
</comment>
<comment type="disruption phenotype">
    <text evidence="7 8 9 10 11 14 15 16 17 20 21 22">Knockout mice are born at the expected Mendelian rate with no morphological abnormalities (PubMed:20923861, PubMed:21593405). They are characterized by spontaneous intestinal hyperplasia, inflammatory cell recruitment, exacerbation of chemical colitis induced by exposure to dextran sodium sulfate (DSS) and develop higher tumor loads in response to a combined treatment with the alkylating procarcinogen azoxymethane (AOM) and DSS (PubMed:21543645, PubMed:21565393, PubMed:21593405, PubMed:26638072). The colitogenic phenotype is associated with altered microbiota and is transmissible to cohoused wild-type mice, both early in postnatal life and during adulthood (PubMed:21565393, PubMed:22763455, PubMed:26638072). The effect on microbiota composition is however unclear, since a number of reports do not observe any difference in microbiota composition between wild-type and knockout mice (PubMed:28801232, PubMed:29281815, PubMed:29281837). Mice infected with an enteric pathogen, such as Citrobacter rodentium, show impaired clearance of the bacteria from colon (PubMed:24581500). Their intestinal epithelium lack a thick continuous overlaying inner mucus layer and exhibit a marked goblet cell hyperplasia along with abrogated mucus secretion (PubMed:24581500). When injected intraperitoneally or intravenously, knockout mice show increased resistance to Salmonella typhimurium, Listeria monocytogenes or Escherichia coli (PubMed:22763455). Mice show reduced intestinal antiviral innate immunity and are more susceptible to oral infection with encephalomyocarditis virus (PubMed:26494172). After crushing the sciatic nerve, mutant mice have a more dramatic drop in sciatic function index immediately upon surgery compared to the control group and need more time to recover fully (PubMed:26253422). Mutant animals show reduced systolic blood pressure without affecting heart rate (PubMed:20923861). Males, but not females, exhibit increased urine flow and decreased ability to reduce urinary flow under water restriction conditions compared to wild type littermates (PubMed:20923861). Mutant males may show somewhat lowered cognitive performance (PubMed:20923861).</text>
</comment>
<comment type="miscellaneous">
    <molecule>Isoform 2</molecule>
    <text evidence="36">Produced by alternative promoter usage.</text>
</comment>
<comment type="miscellaneous">
    <molecule>Isoform 3</molecule>
    <text evidence="36">Produced by alternative splicing.</text>
</comment>
<comment type="similarity">
    <text evidence="36">Belongs to the NLRP family.</text>
</comment>
<comment type="caution">
    <text evidence="9 11 17 20 21 22">The role of the NLRP6 inflammasome in the regulation of the gut microbiota composition is unclear (PubMed:21565393, PubMed:22763455, PubMed:26638072, PubMed:28801232, PubMed:29281815, PubMed:29281837). Some studies suggest that NLRP6 shapes the commensal gut microbiota composition (PubMed:21565393, PubMed:22763455, PubMed:26638072). However, other groups do not observe any difference in microbiota composition between wild-type and knockout mice (PubMed:28801232, PubMed:29281815, PubMed:29281837). Differences observed were attributed to mother and cage covariates rather than Nlrp6 deficiency (PubMed:28801232, PubMed:29281815, PubMed:29281837).</text>
</comment>
<comment type="sequence caution" evidence="36">
    <conflict type="frameshift">
        <sequence resource="EMBL-CDS" id="ACN32212"/>
    </conflict>
</comment>
<dbReference type="EMBL" id="JF810536">
    <property type="protein sequence ID" value="AEI54131.1"/>
    <property type="molecule type" value="mRNA"/>
</dbReference>
<dbReference type="EMBL" id="AC107815">
    <property type="status" value="NOT_ANNOTATED_CDS"/>
    <property type="molecule type" value="Genomic_DNA"/>
</dbReference>
<dbReference type="EMBL" id="AC162287">
    <property type="status" value="NOT_ANNOTATED_CDS"/>
    <property type="molecule type" value="Genomic_DNA"/>
</dbReference>
<dbReference type="EMBL" id="BC013519">
    <property type="protein sequence ID" value="AAH13519.1"/>
    <property type="molecule type" value="mRNA"/>
</dbReference>
<dbReference type="EMBL" id="BC031139">
    <property type="protein sequence ID" value="AAH31139.1"/>
    <property type="molecule type" value="mRNA"/>
</dbReference>
<dbReference type="EMBL" id="FJ222825">
    <property type="protein sequence ID" value="ACN32212.1"/>
    <property type="status" value="ALT_FRAME"/>
    <property type="molecule type" value="mRNA"/>
</dbReference>
<dbReference type="EMBL" id="AY355343">
    <property type="protein sequence ID" value="AAR14740.1"/>
    <property type="molecule type" value="mRNA"/>
</dbReference>
<dbReference type="CCDS" id="CCDS40178.2">
    <molecule id="Q91WS2-1"/>
</dbReference>
<dbReference type="RefSeq" id="NP_598707.2">
    <molecule id="Q91WS2-1"/>
    <property type="nucleotide sequence ID" value="NM_133946.2"/>
</dbReference>
<dbReference type="RefSeq" id="XP_006536212.1">
    <property type="nucleotide sequence ID" value="XM_006536149.3"/>
</dbReference>
<dbReference type="SMR" id="Q91WS2"/>
<dbReference type="CORUM" id="Q91WS2"/>
<dbReference type="DIP" id="DIP-61874N"/>
<dbReference type="FunCoup" id="Q91WS2">
    <property type="interactions" value="16"/>
</dbReference>
<dbReference type="IntAct" id="Q91WS2">
    <property type="interactions" value="4"/>
</dbReference>
<dbReference type="MINT" id="Q91WS2"/>
<dbReference type="STRING" id="10090.ENSMUSP00000139357"/>
<dbReference type="PhosphoSitePlus" id="Q91WS2"/>
<dbReference type="jPOST" id="Q91WS2"/>
<dbReference type="PaxDb" id="10090-ENSMUSP00000139170"/>
<dbReference type="PeptideAtlas" id="Q91WS2"/>
<dbReference type="ProteomicsDB" id="253083">
    <molecule id="Q91WS2-1"/>
</dbReference>
<dbReference type="ProteomicsDB" id="253084">
    <molecule id="Q91WS2-2"/>
</dbReference>
<dbReference type="ProteomicsDB" id="253085">
    <molecule id="Q91WS2-3"/>
</dbReference>
<dbReference type="Antibodypedia" id="58845">
    <property type="antibodies" value="209 antibodies from 30 providers"/>
</dbReference>
<dbReference type="DNASU" id="101613"/>
<dbReference type="Ensembl" id="ENSMUST00000183845.8">
    <molecule id="Q91WS2-1"/>
    <property type="protein sequence ID" value="ENSMUSP00000139357.2"/>
    <property type="gene ID" value="ENSMUSG00000038745.16"/>
</dbReference>
<dbReference type="Ensembl" id="ENSMUST00000184560.2">
    <molecule id="Q91WS2-3"/>
    <property type="protein sequence ID" value="ENSMUSP00000139170.2"/>
    <property type="gene ID" value="ENSMUSG00000038745.16"/>
</dbReference>
<dbReference type="GeneID" id="101613"/>
<dbReference type="KEGG" id="mmu:101613"/>
<dbReference type="UCSC" id="uc009kiv.3">
    <molecule id="Q91WS2-1"/>
    <property type="organism name" value="mouse"/>
</dbReference>
<dbReference type="UCSC" id="uc029wpm.2">
    <property type="organism name" value="mouse"/>
</dbReference>
<dbReference type="AGR" id="MGI:2141990"/>
<dbReference type="CTD" id="171389"/>
<dbReference type="MGI" id="MGI:2141990">
    <property type="gene designation" value="Nlrp6"/>
</dbReference>
<dbReference type="VEuPathDB" id="HostDB:ENSMUSG00000038745"/>
<dbReference type="eggNOG" id="ENOG502SANB">
    <property type="taxonomic scope" value="Eukaryota"/>
</dbReference>
<dbReference type="GeneTree" id="ENSGT00940000162758"/>
<dbReference type="HOGENOM" id="CLU_002274_2_2_1"/>
<dbReference type="InParanoid" id="Q91WS2"/>
<dbReference type="OMA" id="QFMDQSF"/>
<dbReference type="PhylomeDB" id="Q91WS2"/>
<dbReference type="BioGRID-ORCS" id="101613">
    <property type="hits" value="2 hits in 78 CRISPR screens"/>
</dbReference>
<dbReference type="PRO" id="PR:Q91WS2"/>
<dbReference type="Proteomes" id="UP000000589">
    <property type="component" value="Chromosome 7"/>
</dbReference>
<dbReference type="RNAct" id="Q91WS2">
    <property type="molecule type" value="protein"/>
</dbReference>
<dbReference type="Bgee" id="ENSMUSG00000038745">
    <property type="expression patterns" value="Expressed in small intestine Peyer's patch and 50 other cell types or tissues"/>
</dbReference>
<dbReference type="ExpressionAtlas" id="Q91WS2">
    <property type="expression patterns" value="baseline and differential"/>
</dbReference>
<dbReference type="GO" id="GO:0061702">
    <property type="term" value="C:canonical inflammasome complex"/>
    <property type="evidence" value="ECO:0000314"/>
    <property type="project" value="MGI"/>
</dbReference>
<dbReference type="GO" id="GO:0005829">
    <property type="term" value="C:cytosol"/>
    <property type="evidence" value="ECO:0000250"/>
    <property type="project" value="UniProtKB"/>
</dbReference>
<dbReference type="GO" id="GO:0043232">
    <property type="term" value="C:intracellular membraneless organelle"/>
    <property type="evidence" value="ECO:0007669"/>
    <property type="project" value="Ensembl"/>
</dbReference>
<dbReference type="GO" id="GO:0043228">
    <property type="term" value="C:membraneless organelle"/>
    <property type="evidence" value="ECO:0000314"/>
    <property type="project" value="UniProtKB"/>
</dbReference>
<dbReference type="GO" id="GO:0140738">
    <property type="term" value="C:NLRP6 inflammasome complex"/>
    <property type="evidence" value="ECO:0000314"/>
    <property type="project" value="UniProtKB"/>
</dbReference>
<dbReference type="GO" id="GO:0031965">
    <property type="term" value="C:nuclear membrane"/>
    <property type="evidence" value="ECO:0007669"/>
    <property type="project" value="UniProtKB-SubCell"/>
</dbReference>
<dbReference type="GO" id="GO:0005886">
    <property type="term" value="C:plasma membrane"/>
    <property type="evidence" value="ECO:0007669"/>
    <property type="project" value="UniProtKB-SubCell"/>
</dbReference>
<dbReference type="GO" id="GO:0005524">
    <property type="term" value="F:ATP binding"/>
    <property type="evidence" value="ECO:0007669"/>
    <property type="project" value="UniProtKB-KW"/>
</dbReference>
<dbReference type="GO" id="GO:0003725">
    <property type="term" value="F:double-stranded RNA binding"/>
    <property type="evidence" value="ECO:0000314"/>
    <property type="project" value="UniProtKB"/>
</dbReference>
<dbReference type="GO" id="GO:0001530">
    <property type="term" value="F:lipopolysaccharide binding"/>
    <property type="evidence" value="ECO:0000250"/>
    <property type="project" value="UniProtKB"/>
</dbReference>
<dbReference type="GO" id="GO:0070891">
    <property type="term" value="F:lipoteichoic acid binding"/>
    <property type="evidence" value="ECO:0000314"/>
    <property type="project" value="UniProtKB"/>
</dbReference>
<dbReference type="GO" id="GO:0140693">
    <property type="term" value="F:molecular condensate scaffold activity"/>
    <property type="evidence" value="ECO:0000314"/>
    <property type="project" value="UniProtKB"/>
</dbReference>
<dbReference type="GO" id="GO:0038187">
    <property type="term" value="F:pattern recognition receptor activity"/>
    <property type="evidence" value="ECO:0000314"/>
    <property type="project" value="UniProtKB"/>
</dbReference>
<dbReference type="GO" id="GO:0035591">
    <property type="term" value="F:signaling adaptor activity"/>
    <property type="evidence" value="ECO:0007669"/>
    <property type="project" value="Ensembl"/>
</dbReference>
<dbReference type="GO" id="GO:0005000">
    <property type="term" value="F:vasopressin receptor activity"/>
    <property type="evidence" value="ECO:0000250"/>
    <property type="project" value="UniProtKB"/>
</dbReference>
<dbReference type="GO" id="GO:0002526">
    <property type="term" value="P:acute inflammatory response"/>
    <property type="evidence" value="ECO:0000315"/>
    <property type="project" value="MGI"/>
</dbReference>
<dbReference type="GO" id="GO:0002438">
    <property type="term" value="P:acute inflammatory response to antigenic stimulus"/>
    <property type="evidence" value="ECO:0000315"/>
    <property type="project" value="MGI"/>
</dbReference>
<dbReference type="GO" id="GO:0140374">
    <property type="term" value="P:antiviral innate immune response"/>
    <property type="evidence" value="ECO:0000314"/>
    <property type="project" value="UniProtKB"/>
</dbReference>
<dbReference type="GO" id="GO:0050830">
    <property type="term" value="P:defense response to Gram-positive bacterium"/>
    <property type="evidence" value="ECO:0000314"/>
    <property type="project" value="UniProtKB"/>
</dbReference>
<dbReference type="GO" id="GO:0051607">
    <property type="term" value="P:defense response to virus"/>
    <property type="evidence" value="ECO:0000315"/>
    <property type="project" value="UniProtKB"/>
</dbReference>
<dbReference type="GO" id="GO:0048874">
    <property type="term" value="P:host-mediated regulation of intestinal microbiota composition"/>
    <property type="evidence" value="ECO:0000315"/>
    <property type="project" value="UniProtKB"/>
</dbReference>
<dbReference type="GO" id="GO:0070266">
    <property type="term" value="P:necroptotic process"/>
    <property type="evidence" value="ECO:0000315"/>
    <property type="project" value="MGI"/>
</dbReference>
<dbReference type="GO" id="GO:0043124">
    <property type="term" value="P:negative regulation of canonical NF-kappaB signal transduction"/>
    <property type="evidence" value="ECO:0000315"/>
    <property type="project" value="CACAO"/>
</dbReference>
<dbReference type="GO" id="GO:0070373">
    <property type="term" value="P:negative regulation of ERK1 and ERK2 cascade"/>
    <property type="evidence" value="ECO:0000315"/>
    <property type="project" value="CACAO"/>
</dbReference>
<dbReference type="GO" id="GO:0050777">
    <property type="term" value="P:negative regulation of immune response"/>
    <property type="evidence" value="ECO:0000315"/>
    <property type="project" value="MGI"/>
</dbReference>
<dbReference type="GO" id="GO:0002862">
    <property type="term" value="P:negative regulation of inflammatory response to antigenic stimulus"/>
    <property type="evidence" value="ECO:0000315"/>
    <property type="project" value="CACAO"/>
</dbReference>
<dbReference type="GO" id="GO:0043409">
    <property type="term" value="P:negative regulation of MAPK cascade"/>
    <property type="evidence" value="ECO:0000315"/>
    <property type="project" value="MGI"/>
</dbReference>
<dbReference type="GO" id="GO:0034122">
    <property type="term" value="P:negative regulation of toll-like receptor signaling pathway"/>
    <property type="evidence" value="ECO:0000315"/>
    <property type="project" value="MGI"/>
</dbReference>
<dbReference type="GO" id="GO:0032689">
    <property type="term" value="P:negative regulation of type II interferon production"/>
    <property type="evidence" value="ECO:0000315"/>
    <property type="project" value="MGI"/>
</dbReference>
<dbReference type="GO" id="GO:0070946">
    <property type="term" value="P:neutrophil-mediated killing of gram-positive bacterium"/>
    <property type="evidence" value="ECO:0000315"/>
    <property type="project" value="MGI"/>
</dbReference>
<dbReference type="GO" id="GO:0140739">
    <property type="term" value="P:NLRP6 inflammasome complex assembly"/>
    <property type="evidence" value="ECO:0000314"/>
    <property type="project" value="UniProtKB"/>
</dbReference>
<dbReference type="GO" id="GO:0050729">
    <property type="term" value="P:positive regulation of inflammatory response"/>
    <property type="evidence" value="ECO:0000314"/>
    <property type="project" value="UniProtKB"/>
</dbReference>
<dbReference type="GO" id="GO:2000494">
    <property type="term" value="P:positive regulation of interleukin-18-mediated signaling pathway"/>
    <property type="evidence" value="ECO:0000314"/>
    <property type="project" value="UniProtKB"/>
</dbReference>
<dbReference type="GO" id="GO:0051260">
    <property type="term" value="P:protein homooligomerization"/>
    <property type="evidence" value="ECO:0000314"/>
    <property type="project" value="UniProtKB"/>
</dbReference>
<dbReference type="GO" id="GO:0070269">
    <property type="term" value="P:pyroptotic inflammatory response"/>
    <property type="evidence" value="ECO:0000314"/>
    <property type="project" value="UniProtKB"/>
</dbReference>
<dbReference type="GO" id="GO:0010506">
    <property type="term" value="P:regulation of autophagy"/>
    <property type="evidence" value="ECO:0000315"/>
    <property type="project" value="MGI"/>
</dbReference>
<dbReference type="GO" id="GO:0050727">
    <property type="term" value="P:regulation of inflammatory response"/>
    <property type="evidence" value="ECO:0000315"/>
    <property type="project" value="UniProtKB"/>
</dbReference>
<dbReference type="GO" id="GO:0070255">
    <property type="term" value="P:regulation of mucus secretion"/>
    <property type="evidence" value="ECO:0000315"/>
    <property type="project" value="MGI"/>
</dbReference>
<dbReference type="GO" id="GO:0009617">
    <property type="term" value="P:response to bacterium"/>
    <property type="evidence" value="ECO:0000315"/>
    <property type="project" value="MGI"/>
</dbReference>
<dbReference type="GO" id="GO:0042060">
    <property type="term" value="P:wound healing"/>
    <property type="evidence" value="ECO:0000315"/>
    <property type="project" value="MGI"/>
</dbReference>
<dbReference type="CDD" id="cd08321">
    <property type="entry name" value="Pyrin_ASC-like"/>
    <property type="match status" value="1"/>
</dbReference>
<dbReference type="FunFam" id="1.10.533.10:FF:000069">
    <property type="entry name" value="NACHT, LRR and PYD domains-containing protein 6"/>
    <property type="match status" value="1"/>
</dbReference>
<dbReference type="FunFam" id="3.80.10.10:FF:001093">
    <property type="entry name" value="NACHT, LRR and PYD domains-containing protein 6"/>
    <property type="match status" value="1"/>
</dbReference>
<dbReference type="FunFam" id="3.40.50.300:FF:001349">
    <property type="entry name" value="NLR family pyrin domain containing 6"/>
    <property type="match status" value="1"/>
</dbReference>
<dbReference type="Gene3D" id="1.10.533.10">
    <property type="entry name" value="Death Domain, Fas"/>
    <property type="match status" value="1"/>
</dbReference>
<dbReference type="Gene3D" id="3.40.50.300">
    <property type="entry name" value="P-loop containing nucleotide triphosphate hydrolases"/>
    <property type="match status" value="1"/>
</dbReference>
<dbReference type="Gene3D" id="3.80.10.10">
    <property type="entry name" value="Ribonuclease Inhibitor"/>
    <property type="match status" value="1"/>
</dbReference>
<dbReference type="InterPro" id="IPR004020">
    <property type="entry name" value="DAPIN"/>
</dbReference>
<dbReference type="InterPro" id="IPR011029">
    <property type="entry name" value="DEATH-like_dom_sf"/>
</dbReference>
<dbReference type="InterPro" id="IPR032675">
    <property type="entry name" value="LRR_dom_sf"/>
</dbReference>
<dbReference type="InterPro" id="IPR007111">
    <property type="entry name" value="NACHT_NTPase"/>
</dbReference>
<dbReference type="InterPro" id="IPR041267">
    <property type="entry name" value="NLRP_HD2"/>
</dbReference>
<dbReference type="InterPro" id="IPR050637">
    <property type="entry name" value="NLRP_innate_immun_reg"/>
</dbReference>
<dbReference type="InterPro" id="IPR041075">
    <property type="entry name" value="NOD1/2_WH"/>
</dbReference>
<dbReference type="InterPro" id="IPR027417">
    <property type="entry name" value="P-loop_NTPase"/>
</dbReference>
<dbReference type="PANTHER" id="PTHR45690:SF4">
    <property type="entry name" value="NACHT, LRR AND PYD DOMAINS-CONTAINING PROTEIN 10"/>
    <property type="match status" value="1"/>
</dbReference>
<dbReference type="PANTHER" id="PTHR45690">
    <property type="entry name" value="NACHT, LRR AND PYD DOMAINS-CONTAINING PROTEIN 12"/>
    <property type="match status" value="1"/>
</dbReference>
<dbReference type="Pfam" id="PF05729">
    <property type="entry name" value="NACHT"/>
    <property type="match status" value="1"/>
</dbReference>
<dbReference type="Pfam" id="PF17776">
    <property type="entry name" value="NLRC4_HD2"/>
    <property type="match status" value="1"/>
</dbReference>
<dbReference type="Pfam" id="PF17779">
    <property type="entry name" value="NOD2_WH"/>
    <property type="match status" value="1"/>
</dbReference>
<dbReference type="Pfam" id="PF02758">
    <property type="entry name" value="PYRIN"/>
    <property type="match status" value="1"/>
</dbReference>
<dbReference type="SMART" id="SM00368">
    <property type="entry name" value="LRR_RI"/>
    <property type="match status" value="3"/>
</dbReference>
<dbReference type="SMART" id="SM01289">
    <property type="entry name" value="PYRIN"/>
    <property type="match status" value="1"/>
</dbReference>
<dbReference type="SUPFAM" id="SSF47986">
    <property type="entry name" value="DEATH domain"/>
    <property type="match status" value="1"/>
</dbReference>
<dbReference type="SUPFAM" id="SSF52540">
    <property type="entry name" value="P-loop containing nucleoside triphosphate hydrolases"/>
    <property type="match status" value="1"/>
</dbReference>
<dbReference type="SUPFAM" id="SSF52047">
    <property type="entry name" value="RNI-like"/>
    <property type="match status" value="1"/>
</dbReference>
<dbReference type="PROSITE" id="PS50824">
    <property type="entry name" value="DAPIN"/>
    <property type="match status" value="1"/>
</dbReference>
<dbReference type="PROSITE" id="PS50837">
    <property type="entry name" value="NACHT"/>
    <property type="match status" value="1"/>
</dbReference>
<name>NLRP6_MOUSE</name>
<feature type="chain" id="PRO_0000080893" description="NACHT, LRR and PYD domains-containing protein 6">
    <location>
        <begin position="1"/>
        <end position="869"/>
    </location>
</feature>
<feature type="domain" description="Pyrin" evidence="4">
    <location>
        <begin position="37"/>
        <end position="128"/>
    </location>
</feature>
<feature type="domain" description="NACHT" evidence="5">
    <location>
        <begin position="194"/>
        <end position="511"/>
    </location>
</feature>
<feature type="repeat" description="LRR 1" evidence="3">
    <location>
        <begin position="460"/>
        <end position="485"/>
    </location>
</feature>
<feature type="repeat" description="LRR 2" evidence="3">
    <location>
        <begin position="635"/>
        <end position="658"/>
    </location>
</feature>
<feature type="repeat" description="LRR 3" evidence="3">
    <location>
        <begin position="837"/>
        <end position="860"/>
    </location>
</feature>
<feature type="region of interest" description="Disordered" evidence="30">
    <location>
        <begin position="350"/>
        <end position="354"/>
    </location>
</feature>
<feature type="region of interest" description="Disordered" evidence="6">
    <location>
        <begin position="577"/>
        <end position="608"/>
    </location>
</feature>
<feature type="compositionally biased region" description="Acidic residues" evidence="6">
    <location>
        <begin position="596"/>
        <end position="608"/>
    </location>
</feature>
<feature type="binding site" evidence="5">
    <location>
        <begin position="200"/>
        <end position="207"/>
    </location>
    <ligand>
        <name>ATP</name>
        <dbReference type="ChEBI" id="CHEBI:30616"/>
    </ligand>
</feature>
<feature type="splice variant" id="VSP_042301" description="In isoform 2." evidence="32 35">
    <location>
        <begin position="1"/>
        <end position="423"/>
    </location>
</feature>
<feature type="splice variant" id="VSP_057971" description="In isoform 3.">
    <original>MDAAGASCS</original>
    <variation>MYCPGAPCGECAMCDPGCFGGSGTGPIQVASVMITLLIP</variation>
    <location>
        <begin position="1"/>
        <end position="9"/>
    </location>
</feature>
<feature type="mutagenesis site" description="Does not affect formation of liquid-liquid phase separation (LLPS)." evidence="30">
    <original>RARR</original>
    <variation>AAAA</variation>
    <location>
        <begin position="170"/>
        <end position="173"/>
    </location>
</feature>
<feature type="mutagenesis site" description="Impaired formation of liquid-liquid phase separation (LLPS), leading to reduced formation of the NLRP6 inflammasome and GSDMD-dependent release of IL18." evidence="30">
    <original>KDKKK</original>
    <variation>ADAAA</variation>
    <location>
        <begin position="350"/>
        <end position="354"/>
    </location>
</feature>
<feature type="sequence conflict" description="In Ref. 1; ACN32212." evidence="36" ref="1">
    <original>G</original>
    <variation>F</variation>
    <location>
        <position position="429"/>
    </location>
</feature>
<feature type="sequence conflict" description="In Ref. 1; ACN32212." evidence="36" ref="1">
    <location>
        <position position="454"/>
    </location>
</feature>
<feature type="sequence conflict" description="In Ref. 1; ACN32212." evidence="36" ref="1">
    <original>P</original>
    <variation>R</variation>
    <location>
        <position position="733"/>
    </location>
</feature>
<feature type="sequence conflict" description="In Ref. 1; ACN32212." evidence="36" ref="1">
    <original>K</original>
    <variation>KIRHTSPASEG</variation>
    <location>
        <position position="869"/>
    </location>
</feature>